<protein>
    <recommendedName>
        <fullName>Protein FixA</fullName>
    </recommendedName>
</protein>
<organism>
    <name type="scientific">Bradyrhizobium diazoefficiens (strain JCM 10833 / BCRC 13528 / IAM 13628 / NBRC 14792 / USDA 110)</name>
    <dbReference type="NCBI Taxonomy" id="224911"/>
    <lineage>
        <taxon>Bacteria</taxon>
        <taxon>Pseudomonadati</taxon>
        <taxon>Pseudomonadota</taxon>
        <taxon>Alphaproteobacteria</taxon>
        <taxon>Hyphomicrobiales</taxon>
        <taxon>Nitrobacteraceae</taxon>
        <taxon>Bradyrhizobium</taxon>
    </lineage>
</organism>
<name>FIXA_BRADU</name>
<comment type="function">
    <text>May play a role in a redox process involved in nitrogen fixation.</text>
</comment>
<comment type="subunit">
    <text evidence="1">FixA and FixB form a heterodimer.</text>
</comment>
<comment type="similarity">
    <text evidence="1">Belongs to the ETF beta-subunit/FixA family.</text>
</comment>
<dbReference type="EMBL" id="U32226">
    <property type="protein sequence ID" value="AAB00902.1"/>
    <property type="molecule type" value="Genomic_DNA"/>
</dbReference>
<dbReference type="EMBL" id="AH010242">
    <property type="protein sequence ID" value="AAG61009.1"/>
    <property type="molecule type" value="Genomic_DNA"/>
</dbReference>
<dbReference type="EMBL" id="BA000040">
    <property type="protein sequence ID" value="BAC47303.1"/>
    <property type="molecule type" value="Genomic_DNA"/>
</dbReference>
<dbReference type="RefSeq" id="NP_768678.1">
    <property type="nucleotide sequence ID" value="NC_004463.1"/>
</dbReference>
<dbReference type="RefSeq" id="WP_011084835.1">
    <property type="nucleotide sequence ID" value="NZ_CP011360.1"/>
</dbReference>
<dbReference type="SMR" id="P53577"/>
<dbReference type="FunCoup" id="P53577">
    <property type="interactions" value="633"/>
</dbReference>
<dbReference type="STRING" id="224911.AAV28_07030"/>
<dbReference type="EnsemblBacteria" id="BAC47303">
    <property type="protein sequence ID" value="BAC47303"/>
    <property type="gene ID" value="BAC47303"/>
</dbReference>
<dbReference type="KEGG" id="bja:blr2038"/>
<dbReference type="PATRIC" id="fig|224911.44.peg.1540"/>
<dbReference type="eggNOG" id="COG2086">
    <property type="taxonomic scope" value="Bacteria"/>
</dbReference>
<dbReference type="HOGENOM" id="CLU_060196_2_1_5"/>
<dbReference type="InParanoid" id="P53577"/>
<dbReference type="OrthoDB" id="9804960at2"/>
<dbReference type="PhylomeDB" id="P53577"/>
<dbReference type="Proteomes" id="UP000002526">
    <property type="component" value="Chromosome"/>
</dbReference>
<dbReference type="GO" id="GO:0009055">
    <property type="term" value="F:electron transfer activity"/>
    <property type="evidence" value="ECO:0000318"/>
    <property type="project" value="GO_Central"/>
</dbReference>
<dbReference type="GO" id="GO:0009399">
    <property type="term" value="P:nitrogen fixation"/>
    <property type="evidence" value="ECO:0007669"/>
    <property type="project" value="UniProtKB-KW"/>
</dbReference>
<dbReference type="CDD" id="cd01714">
    <property type="entry name" value="ETF_beta"/>
    <property type="match status" value="1"/>
</dbReference>
<dbReference type="Gene3D" id="3.40.50.620">
    <property type="entry name" value="HUPs"/>
    <property type="match status" value="1"/>
</dbReference>
<dbReference type="InterPro" id="IPR000049">
    <property type="entry name" value="ET-Flavoprotein_bsu_CS"/>
</dbReference>
<dbReference type="InterPro" id="IPR014730">
    <property type="entry name" value="ETF_a/b_N"/>
</dbReference>
<dbReference type="InterPro" id="IPR012255">
    <property type="entry name" value="ETF_b"/>
</dbReference>
<dbReference type="InterPro" id="IPR033948">
    <property type="entry name" value="ETF_beta_N"/>
</dbReference>
<dbReference type="InterPro" id="IPR014729">
    <property type="entry name" value="Rossmann-like_a/b/a_fold"/>
</dbReference>
<dbReference type="PANTHER" id="PTHR21294">
    <property type="entry name" value="ELECTRON TRANSFER FLAVOPROTEIN BETA-SUBUNIT"/>
    <property type="match status" value="1"/>
</dbReference>
<dbReference type="PANTHER" id="PTHR21294:SF17">
    <property type="entry name" value="PROTEIN FIXA"/>
    <property type="match status" value="1"/>
</dbReference>
<dbReference type="Pfam" id="PF01012">
    <property type="entry name" value="ETF"/>
    <property type="match status" value="1"/>
</dbReference>
<dbReference type="PIRSF" id="PIRSF000090">
    <property type="entry name" value="Beta-ETF"/>
    <property type="match status" value="1"/>
</dbReference>
<dbReference type="SMART" id="SM00893">
    <property type="entry name" value="ETF"/>
    <property type="match status" value="1"/>
</dbReference>
<dbReference type="SUPFAM" id="SSF52402">
    <property type="entry name" value="Adenine nucleotide alpha hydrolases-like"/>
    <property type="match status" value="1"/>
</dbReference>
<dbReference type="PROSITE" id="PS01065">
    <property type="entry name" value="ETF_BETA"/>
    <property type="match status" value="1"/>
</dbReference>
<sequence>MHNIVCIKQVPDSAQIRVHPVTNTIMRQGVPTIINPYDLFALEAALGLRDRFGGEITVLTMGPPSAEESLRKALTYGADRAVLLTDRCFAGSDTLATTYALATAIRKIGKEYGPANLIFTGKQTIDGDTAQVGPGIAKRLGVGQLTYVAKVRSVDVANETIEAERRSEGGVQVLHTRLPCLITMLEATNQIRRGAMADALRAARAKIVKWSAQDAGVEDISKCGLKGSPTVVKRVFAPPARAERAALVESAEQPAQALIDAIFLNQPKLETDLATLARDARSGLSGQC</sequence>
<feature type="chain" id="PRO_0000167887" description="Protein FixA">
    <location>
        <begin position="1"/>
        <end position="288"/>
    </location>
</feature>
<keyword id="KW-0249">Electron transport</keyword>
<keyword id="KW-0535">Nitrogen fixation</keyword>
<keyword id="KW-1185">Reference proteome</keyword>
<keyword id="KW-0813">Transport</keyword>
<evidence type="ECO:0000305" key="1"/>
<gene>
    <name type="primary">fixA</name>
    <name type="ordered locus">blr2038</name>
</gene>
<proteinExistence type="inferred from homology"/>
<reference key="1">
    <citation type="journal article" date="1996" name="Arch. Microbiol.">
        <title>Bradyrhizobium japonicum possesses two discrete sets of electron transfer flavoprotein genes: fixA, fixB and etfS, etfL.</title>
        <authorList>
            <person name="Weidenhaupt M."/>
            <person name="Rossi P."/>
            <person name="Beck C."/>
            <person name="Fischer H.-M."/>
            <person name="Hennecke H."/>
        </authorList>
    </citation>
    <scope>NUCLEOTIDE SEQUENCE [GENOMIC DNA]</scope>
    <source>
        <strain>USDA 3I1b110</strain>
    </source>
</reference>
<reference key="2">
    <citation type="journal article" date="2001" name="J. Bacteriol.">
        <title>Potential symbiosis-specific genes uncovered by sequencing a 410-kb DNA region of the Bradyrhizobium japonicum chromosome.</title>
        <authorList>
            <person name="Goettfert M."/>
            <person name="Roethlisberger S."/>
            <person name="Kuendig C."/>
            <person name="Beck C."/>
            <person name="Marty R."/>
            <person name="Hennecke H."/>
        </authorList>
    </citation>
    <scope>NUCLEOTIDE SEQUENCE [GENOMIC DNA]</scope>
    <source>
        <strain>USDA 110spc4</strain>
    </source>
</reference>
<reference key="3">
    <citation type="journal article" date="2002" name="DNA Res.">
        <title>Complete genomic sequence of nitrogen-fixing symbiotic bacterium Bradyrhizobium japonicum USDA110.</title>
        <authorList>
            <person name="Kaneko T."/>
            <person name="Nakamura Y."/>
            <person name="Sato S."/>
            <person name="Minamisawa K."/>
            <person name="Uchiumi T."/>
            <person name="Sasamoto S."/>
            <person name="Watanabe A."/>
            <person name="Idesawa K."/>
            <person name="Iriguchi M."/>
            <person name="Kawashima K."/>
            <person name="Kohara M."/>
            <person name="Matsumoto M."/>
            <person name="Shimpo S."/>
            <person name="Tsuruoka H."/>
            <person name="Wada T."/>
            <person name="Yamada M."/>
            <person name="Tabata S."/>
        </authorList>
    </citation>
    <scope>NUCLEOTIDE SEQUENCE [LARGE SCALE GENOMIC DNA]</scope>
    <source>
        <strain>JCM 10833 / BCRC 13528 / IAM 13628 / NBRC 14792 / USDA 110</strain>
    </source>
</reference>
<accession>P53577</accession>
<accession>Q9AMY2</accession>